<evidence type="ECO:0000250" key="1">
    <source>
        <dbReference type="UniProtKB" id="P62852"/>
    </source>
</evidence>
<evidence type="ECO:0000256" key="2">
    <source>
        <dbReference type="SAM" id="MobiDB-lite"/>
    </source>
</evidence>
<evidence type="ECO:0000269" key="3">
    <source>
    </source>
</evidence>
<evidence type="ECO:0000303" key="4">
    <source>
    </source>
</evidence>
<evidence type="ECO:0000305" key="5"/>
<evidence type="ECO:0007744" key="6">
    <source>
    </source>
</evidence>
<evidence type="ECO:0007829" key="7">
    <source>
        <dbReference type="PDB" id="6ZLW"/>
    </source>
</evidence>
<evidence type="ECO:0007829" key="8">
    <source>
        <dbReference type="PDB" id="7R4X"/>
    </source>
</evidence>
<organism>
    <name type="scientific">Homo sapiens</name>
    <name type="common">Human</name>
    <dbReference type="NCBI Taxonomy" id="9606"/>
    <lineage>
        <taxon>Eukaryota</taxon>
        <taxon>Metazoa</taxon>
        <taxon>Chordata</taxon>
        <taxon>Craniata</taxon>
        <taxon>Vertebrata</taxon>
        <taxon>Euteleostomi</taxon>
        <taxon>Mammalia</taxon>
        <taxon>Eutheria</taxon>
        <taxon>Euarchontoglires</taxon>
        <taxon>Primates</taxon>
        <taxon>Haplorrhini</taxon>
        <taxon>Catarrhini</taxon>
        <taxon>Hominidae</taxon>
        <taxon>Homo</taxon>
    </lineage>
</organism>
<accession>P62851</accession>
<accession>B2R4M7</accession>
<accession>P25111</accession>
<feature type="chain" id="PRO_0000192869" description="Small ribosomal subunit protein eS25">
    <location>
        <begin position="1"/>
        <end position="125"/>
    </location>
</feature>
<feature type="region of interest" description="Disordered" evidence="2">
    <location>
        <begin position="1"/>
        <end position="38"/>
    </location>
</feature>
<feature type="compositionally biased region" description="Basic and acidic residues" evidence="2">
    <location>
        <begin position="1"/>
        <end position="23"/>
    </location>
</feature>
<feature type="compositionally biased region" description="Basic residues" evidence="2">
    <location>
        <begin position="28"/>
        <end position="38"/>
    </location>
</feature>
<feature type="modified residue" description="N6-acetyllysine" evidence="1">
    <location>
        <position position="43"/>
    </location>
</feature>
<feature type="modified residue" description="N6-acetyllysine; alternate" evidence="6">
    <location>
        <position position="52"/>
    </location>
</feature>
<feature type="modified residue" description="N6-succinyllysine; alternate" evidence="1">
    <location>
        <position position="52"/>
    </location>
</feature>
<feature type="modified residue" description="N6-acetyllysine" evidence="6">
    <location>
        <position position="60"/>
    </location>
</feature>
<feature type="modified residue" description="N6-acetyllysine" evidence="6">
    <location>
        <position position="66"/>
    </location>
</feature>
<feature type="modified residue" description="N6-acetyllysine; alternate" evidence="6">
    <location>
        <position position="94"/>
    </location>
</feature>
<feature type="modified residue" description="N6-succinyllysine; alternate" evidence="1">
    <location>
        <position position="94"/>
    </location>
</feature>
<feature type="strand" evidence="8">
    <location>
        <begin position="47"/>
        <end position="50"/>
    </location>
</feature>
<feature type="helix" evidence="8">
    <location>
        <begin position="52"/>
        <end position="59"/>
    </location>
</feature>
<feature type="helix" evidence="8">
    <location>
        <begin position="62"/>
        <end position="64"/>
    </location>
</feature>
<feature type="strand" evidence="7">
    <location>
        <begin position="65"/>
        <end position="68"/>
    </location>
</feature>
<feature type="helix" evidence="8">
    <location>
        <begin position="70"/>
        <end position="77"/>
    </location>
</feature>
<feature type="helix" evidence="8">
    <location>
        <begin position="82"/>
        <end position="93"/>
    </location>
</feature>
<feature type="strand" evidence="8">
    <location>
        <begin position="96"/>
        <end position="99"/>
    </location>
</feature>
<feature type="strand" evidence="8">
    <location>
        <begin position="109"/>
        <end position="111"/>
    </location>
</feature>
<sequence length="125" mass="13742">MPPKDDKKKKDAGKSAKKDKDPVNKSGGKAKKKKWSKGKVRDKLNNLVLFDKATYDKLCKEVPNYKLITPAVVSERLKIRGSLARAALQELLSKGLIKLVSKHRAQVIYTRNTKGGDAPAAGEDA</sequence>
<keyword id="KW-0002">3D-structure</keyword>
<keyword id="KW-0007">Acetylation</keyword>
<keyword id="KW-0963">Cytoplasm</keyword>
<keyword id="KW-0903">Direct protein sequencing</keyword>
<keyword id="KW-1267">Proteomics identification</keyword>
<keyword id="KW-1185">Reference proteome</keyword>
<keyword id="KW-0687">Ribonucleoprotein</keyword>
<keyword id="KW-0689">Ribosomal protein</keyword>
<comment type="function">
    <text evidence="3">Component of the small ribosomal subunit (PubMed:23636399). The ribosome is a large ribonucleoprotein complex responsible for the synthesis of proteins in the cell (PubMed:23636399).</text>
</comment>
<comment type="subunit">
    <text evidence="3">Component of the small ribosomal subunit.</text>
</comment>
<comment type="interaction">
    <interactant intactId="EBI-353054">
        <id>P62851</id>
    </interactant>
    <interactant intactId="EBI-2549423">
        <id>Q6NT76</id>
        <label>HMBOX1</label>
    </interactant>
    <organismsDiffer>false</organismsDiffer>
    <experiments>3</experiments>
</comment>
<comment type="interaction">
    <interactant intactId="EBI-353054">
        <id>P62851</id>
    </interactant>
    <interactant intactId="EBI-3920396">
        <id>Q6ZUT1</id>
        <label>NKAPD1</label>
    </interactant>
    <organismsDiffer>false</organismsDiffer>
    <experiments>3</experiments>
</comment>
<comment type="interaction">
    <interactant intactId="EBI-353054">
        <id>P62851</id>
    </interactant>
    <interactant intactId="EBI-745680">
        <id>Q96MF2</id>
        <label>STAC3</label>
    </interactant>
    <organismsDiffer>false</organismsDiffer>
    <experiments>3</experiments>
</comment>
<comment type="interaction">
    <interactant intactId="EBI-353054">
        <id>P62851</id>
    </interactant>
    <interactant intactId="EBI-741515">
        <id>Q9NVV9</id>
        <label>THAP1</label>
    </interactant>
    <organismsDiffer>false</organismsDiffer>
    <experiments>3</experiments>
</comment>
<comment type="interaction">
    <interactant intactId="EBI-353054">
        <id>P62851</id>
    </interactant>
    <interactant intactId="EBI-947459">
        <id>Q9H2G4</id>
        <label>TSPYL2</label>
    </interactant>
    <organismsDiffer>false</organismsDiffer>
    <experiments>3</experiments>
</comment>
<comment type="interaction">
    <interactant intactId="EBI-353054">
        <id>P62851</id>
    </interactant>
    <interactant intactId="EBI-10176632">
        <id>O43829</id>
        <label>ZBTB14</label>
    </interactant>
    <organismsDiffer>false</organismsDiffer>
    <experiments>3</experiments>
</comment>
<comment type="subcellular location">
    <subcellularLocation>
        <location evidence="3">Cytoplasm</location>
    </subcellularLocation>
</comment>
<comment type="similarity">
    <text evidence="5">Belongs to the eukaryotic ribosomal protein eS25 family.</text>
</comment>
<reference key="1">
    <citation type="journal article" date="1991" name="Gene">
        <title>Cloning and sequencing a cDNA encoding human ribosomal protein S25.</title>
        <authorList>
            <person name="Li M."/>
            <person name="Latoud C."/>
            <person name="Center M.S."/>
        </authorList>
    </citation>
    <scope>NUCLEOTIDE SEQUENCE [MRNA]</scope>
</reference>
<reference key="2">
    <citation type="journal article" date="2002" name="Genome Res.">
        <title>The human ribosomal protein genes: sequencing and comparative analysis of 73 genes.</title>
        <authorList>
            <person name="Yoshihama M."/>
            <person name="Uechi T."/>
            <person name="Asakawa S."/>
            <person name="Kawasaki K."/>
            <person name="Kato S."/>
            <person name="Higa S."/>
            <person name="Maeda N."/>
            <person name="Minoshima S."/>
            <person name="Tanaka T."/>
            <person name="Shimizu N."/>
            <person name="Kenmochi N."/>
        </authorList>
    </citation>
    <scope>NUCLEOTIDE SEQUENCE [GENOMIC DNA]</scope>
</reference>
<reference key="3">
    <citation type="journal article" date="2004" name="Nat. Genet.">
        <title>Complete sequencing and characterization of 21,243 full-length human cDNAs.</title>
        <authorList>
            <person name="Ota T."/>
            <person name="Suzuki Y."/>
            <person name="Nishikawa T."/>
            <person name="Otsuki T."/>
            <person name="Sugiyama T."/>
            <person name="Irie R."/>
            <person name="Wakamatsu A."/>
            <person name="Hayashi K."/>
            <person name="Sato H."/>
            <person name="Nagai K."/>
            <person name="Kimura K."/>
            <person name="Makita H."/>
            <person name="Sekine M."/>
            <person name="Obayashi M."/>
            <person name="Nishi T."/>
            <person name="Shibahara T."/>
            <person name="Tanaka T."/>
            <person name="Ishii S."/>
            <person name="Yamamoto J."/>
            <person name="Saito K."/>
            <person name="Kawai Y."/>
            <person name="Isono Y."/>
            <person name="Nakamura Y."/>
            <person name="Nagahari K."/>
            <person name="Murakami K."/>
            <person name="Yasuda T."/>
            <person name="Iwayanagi T."/>
            <person name="Wagatsuma M."/>
            <person name="Shiratori A."/>
            <person name="Sudo H."/>
            <person name="Hosoiri T."/>
            <person name="Kaku Y."/>
            <person name="Kodaira H."/>
            <person name="Kondo H."/>
            <person name="Sugawara M."/>
            <person name="Takahashi M."/>
            <person name="Kanda K."/>
            <person name="Yokoi T."/>
            <person name="Furuya T."/>
            <person name="Kikkawa E."/>
            <person name="Omura Y."/>
            <person name="Abe K."/>
            <person name="Kamihara K."/>
            <person name="Katsuta N."/>
            <person name="Sato K."/>
            <person name="Tanikawa M."/>
            <person name="Yamazaki M."/>
            <person name="Ninomiya K."/>
            <person name="Ishibashi T."/>
            <person name="Yamashita H."/>
            <person name="Murakawa K."/>
            <person name="Fujimori K."/>
            <person name="Tanai H."/>
            <person name="Kimata M."/>
            <person name="Watanabe M."/>
            <person name="Hiraoka S."/>
            <person name="Chiba Y."/>
            <person name="Ishida S."/>
            <person name="Ono Y."/>
            <person name="Takiguchi S."/>
            <person name="Watanabe S."/>
            <person name="Yosida M."/>
            <person name="Hotuta T."/>
            <person name="Kusano J."/>
            <person name="Kanehori K."/>
            <person name="Takahashi-Fujii A."/>
            <person name="Hara H."/>
            <person name="Tanase T.-O."/>
            <person name="Nomura Y."/>
            <person name="Togiya S."/>
            <person name="Komai F."/>
            <person name="Hara R."/>
            <person name="Takeuchi K."/>
            <person name="Arita M."/>
            <person name="Imose N."/>
            <person name="Musashino K."/>
            <person name="Yuuki H."/>
            <person name="Oshima A."/>
            <person name="Sasaki N."/>
            <person name="Aotsuka S."/>
            <person name="Yoshikawa Y."/>
            <person name="Matsunawa H."/>
            <person name="Ichihara T."/>
            <person name="Shiohata N."/>
            <person name="Sano S."/>
            <person name="Moriya S."/>
            <person name="Momiyama H."/>
            <person name="Satoh N."/>
            <person name="Takami S."/>
            <person name="Terashima Y."/>
            <person name="Suzuki O."/>
            <person name="Nakagawa S."/>
            <person name="Senoh A."/>
            <person name="Mizoguchi H."/>
            <person name="Goto Y."/>
            <person name="Shimizu F."/>
            <person name="Wakebe H."/>
            <person name="Hishigaki H."/>
            <person name="Watanabe T."/>
            <person name="Sugiyama A."/>
            <person name="Takemoto M."/>
            <person name="Kawakami B."/>
            <person name="Yamazaki M."/>
            <person name="Watanabe K."/>
            <person name="Kumagai A."/>
            <person name="Itakura S."/>
            <person name="Fukuzumi Y."/>
            <person name="Fujimori Y."/>
            <person name="Komiyama M."/>
            <person name="Tashiro H."/>
            <person name="Tanigami A."/>
            <person name="Fujiwara T."/>
            <person name="Ono T."/>
            <person name="Yamada K."/>
            <person name="Fujii Y."/>
            <person name="Ozaki K."/>
            <person name="Hirao M."/>
            <person name="Ohmori Y."/>
            <person name="Kawabata A."/>
            <person name="Hikiji T."/>
            <person name="Kobatake N."/>
            <person name="Inagaki H."/>
            <person name="Ikema Y."/>
            <person name="Okamoto S."/>
            <person name="Okitani R."/>
            <person name="Kawakami T."/>
            <person name="Noguchi S."/>
            <person name="Itoh T."/>
            <person name="Shigeta K."/>
            <person name="Senba T."/>
            <person name="Matsumura K."/>
            <person name="Nakajima Y."/>
            <person name="Mizuno T."/>
            <person name="Morinaga M."/>
            <person name="Sasaki M."/>
            <person name="Togashi T."/>
            <person name="Oyama M."/>
            <person name="Hata H."/>
            <person name="Watanabe M."/>
            <person name="Komatsu T."/>
            <person name="Mizushima-Sugano J."/>
            <person name="Satoh T."/>
            <person name="Shirai Y."/>
            <person name="Takahashi Y."/>
            <person name="Nakagawa K."/>
            <person name="Okumura K."/>
            <person name="Nagase T."/>
            <person name="Nomura N."/>
            <person name="Kikuchi H."/>
            <person name="Masuho Y."/>
            <person name="Yamashita R."/>
            <person name="Nakai K."/>
            <person name="Yada T."/>
            <person name="Nakamura Y."/>
            <person name="Ohara O."/>
            <person name="Isogai T."/>
            <person name="Sugano S."/>
        </authorList>
    </citation>
    <scope>NUCLEOTIDE SEQUENCE [LARGE SCALE MRNA]</scope>
    <source>
        <tissue>Tongue</tissue>
    </source>
</reference>
<reference key="4">
    <citation type="submission" date="2005-07" db="EMBL/GenBank/DDBJ databases">
        <authorList>
            <person name="Mural R.J."/>
            <person name="Istrail S."/>
            <person name="Sutton G.G."/>
            <person name="Florea L."/>
            <person name="Halpern A.L."/>
            <person name="Mobarry C.M."/>
            <person name="Lippert R."/>
            <person name="Walenz B."/>
            <person name="Shatkay H."/>
            <person name="Dew I."/>
            <person name="Miller J.R."/>
            <person name="Flanigan M.J."/>
            <person name="Edwards N.J."/>
            <person name="Bolanos R."/>
            <person name="Fasulo D."/>
            <person name="Halldorsson B.V."/>
            <person name="Hannenhalli S."/>
            <person name="Turner R."/>
            <person name="Yooseph S."/>
            <person name="Lu F."/>
            <person name="Nusskern D.R."/>
            <person name="Shue B.C."/>
            <person name="Zheng X.H."/>
            <person name="Zhong F."/>
            <person name="Delcher A.L."/>
            <person name="Huson D.H."/>
            <person name="Kravitz S.A."/>
            <person name="Mouchard L."/>
            <person name="Reinert K."/>
            <person name="Remington K.A."/>
            <person name="Clark A.G."/>
            <person name="Waterman M.S."/>
            <person name="Eichler E.E."/>
            <person name="Adams M.D."/>
            <person name="Hunkapiller M.W."/>
            <person name="Myers E.W."/>
            <person name="Venter J.C."/>
        </authorList>
    </citation>
    <scope>NUCLEOTIDE SEQUENCE [LARGE SCALE GENOMIC DNA]</scope>
</reference>
<reference key="5">
    <citation type="journal article" date="2004" name="Genome Res.">
        <title>The status, quality, and expansion of the NIH full-length cDNA project: the Mammalian Gene Collection (MGC).</title>
        <authorList>
            <consortium name="The MGC Project Team"/>
        </authorList>
    </citation>
    <scope>NUCLEOTIDE SEQUENCE [LARGE SCALE MRNA]</scope>
    <source>
        <tissue>Pancreas</tissue>
        <tissue>Skin</tissue>
    </source>
</reference>
<reference key="6">
    <citation type="journal article" date="1996" name="Eur. J. Biochem.">
        <title>Characterization of the human small-ribosomal-subunit proteins by N-terminal and internal sequencing, and mass spectrometry.</title>
        <authorList>
            <person name="Vladimirov S.N."/>
            <person name="Ivanov A.V."/>
            <person name="Karpova G.G."/>
            <person name="Musolyamov A.K."/>
            <person name="Egorov T.A."/>
            <person name="Thiede B."/>
            <person name="Wittmann-Liebold B."/>
            <person name="Otto A."/>
        </authorList>
    </citation>
    <scope>PROTEIN SEQUENCE OF 103-114</scope>
    <source>
        <tissue>Placenta</tissue>
    </source>
</reference>
<reference key="7">
    <citation type="journal article" date="2003" name="Nature">
        <title>Proteomic characterization of the human centrosome by protein correlation profiling.</title>
        <authorList>
            <person name="Andersen J.S."/>
            <person name="Wilkinson C.J."/>
            <person name="Mayor T."/>
            <person name="Mortensen P."/>
            <person name="Nigg E.A."/>
            <person name="Mann M."/>
        </authorList>
    </citation>
    <scope>IDENTIFICATION BY MASS SPECTROMETRY</scope>
    <source>
        <tissue>Lymphoblast</tissue>
    </source>
</reference>
<reference key="8">
    <citation type="journal article" date="2009" name="Science">
        <title>Lysine acetylation targets protein complexes and co-regulates major cellular functions.</title>
        <authorList>
            <person name="Choudhary C."/>
            <person name="Kumar C."/>
            <person name="Gnad F."/>
            <person name="Nielsen M.L."/>
            <person name="Rehman M."/>
            <person name="Walther T.C."/>
            <person name="Olsen J.V."/>
            <person name="Mann M."/>
        </authorList>
    </citation>
    <scope>ACETYLATION [LARGE SCALE ANALYSIS] AT LYS-52; LYS-60; LYS-66 AND LYS-94</scope>
    <scope>IDENTIFICATION BY MASS SPECTROMETRY [LARGE SCALE ANALYSIS]</scope>
</reference>
<reference key="9">
    <citation type="journal article" date="2011" name="BMC Syst. Biol.">
        <title>Initial characterization of the human central proteome.</title>
        <authorList>
            <person name="Burkard T.R."/>
            <person name="Planyavsky M."/>
            <person name="Kaupe I."/>
            <person name="Breitwieser F.P."/>
            <person name="Buerckstuemmer T."/>
            <person name="Bennett K.L."/>
            <person name="Superti-Furga G."/>
            <person name="Colinge J."/>
        </authorList>
    </citation>
    <scope>IDENTIFICATION BY MASS SPECTROMETRY [LARGE SCALE ANALYSIS]</scope>
</reference>
<reference key="10">
    <citation type="journal article" date="2014" name="Curr. Opin. Struct. Biol.">
        <title>A new system for naming ribosomal proteins.</title>
        <authorList>
            <person name="Ban N."/>
            <person name="Beckmann R."/>
            <person name="Cate J.H.D."/>
            <person name="Dinman J.D."/>
            <person name="Dragon F."/>
            <person name="Ellis S.R."/>
            <person name="Lafontaine D.L.J."/>
            <person name="Lindahl L."/>
            <person name="Liljas A."/>
            <person name="Lipton J.M."/>
            <person name="McAlear M.A."/>
            <person name="Moore P.B."/>
            <person name="Noller H.F."/>
            <person name="Ortega J."/>
            <person name="Panse V.G."/>
            <person name="Ramakrishnan V."/>
            <person name="Spahn C.M.T."/>
            <person name="Steitz T.A."/>
            <person name="Tchorzewski M."/>
            <person name="Tollervey D."/>
            <person name="Warren A.J."/>
            <person name="Williamson J.R."/>
            <person name="Wilson D."/>
            <person name="Yonath A."/>
            <person name="Yusupov M."/>
        </authorList>
    </citation>
    <scope>NOMENCLATURE</scope>
</reference>
<reference key="11">
    <citation type="journal article" date="2015" name="Proteomics">
        <title>N-terminome analysis of the human mitochondrial proteome.</title>
        <authorList>
            <person name="Vaca Jacome A.S."/>
            <person name="Rabilloud T."/>
            <person name="Schaeffer-Reiss C."/>
            <person name="Rompais M."/>
            <person name="Ayoub D."/>
            <person name="Lane L."/>
            <person name="Bairoch A."/>
            <person name="Van Dorsselaer A."/>
            <person name="Carapito C."/>
        </authorList>
    </citation>
    <scope>IDENTIFICATION BY MASS SPECTROMETRY [LARGE SCALE ANALYSIS]</scope>
</reference>
<reference key="12">
    <citation type="journal article" date="2013" name="Nature">
        <title>Structures of the human and Drosophila 80S ribosome.</title>
        <authorList>
            <person name="Anger A.M."/>
            <person name="Armache J.P."/>
            <person name="Berninghausen O."/>
            <person name="Habeck M."/>
            <person name="Subklewe M."/>
            <person name="Wilson D.N."/>
            <person name="Beckmann R."/>
        </authorList>
    </citation>
    <scope>STRUCTURE BY ELECTRON MICROSCOPY (5.0 ANGSTROMS) OF 80S RIBOSOME</scope>
    <scope>FUNCTION</scope>
    <scope>SUBUNIT</scope>
    <scope>SUBCELLULAR LOCATION</scope>
</reference>
<gene>
    <name type="primary">RPS25</name>
</gene>
<proteinExistence type="evidence at protein level"/>
<name>RS25_HUMAN</name>
<protein>
    <recommendedName>
        <fullName evidence="4">Small ribosomal subunit protein eS25</fullName>
    </recommendedName>
    <alternativeName>
        <fullName>40S ribosomal protein S25</fullName>
    </alternativeName>
</protein>
<dbReference type="EMBL" id="M64716">
    <property type="protein sequence ID" value="AAA16105.1"/>
    <property type="molecule type" value="mRNA"/>
</dbReference>
<dbReference type="EMBL" id="AB061844">
    <property type="protein sequence ID" value="BAB79482.1"/>
    <property type="molecule type" value="Genomic_DNA"/>
</dbReference>
<dbReference type="EMBL" id="AK311883">
    <property type="protein sequence ID" value="BAG34824.1"/>
    <property type="molecule type" value="mRNA"/>
</dbReference>
<dbReference type="EMBL" id="CH471065">
    <property type="protein sequence ID" value="EAW67426.1"/>
    <property type="molecule type" value="Genomic_DNA"/>
</dbReference>
<dbReference type="EMBL" id="BC003537">
    <property type="protein sequence ID" value="AAH03537.1"/>
    <property type="molecule type" value="mRNA"/>
</dbReference>
<dbReference type="EMBL" id="BC004294">
    <property type="protein sequence ID" value="AAH04294.1"/>
    <property type="molecule type" value="mRNA"/>
</dbReference>
<dbReference type="EMBL" id="BC004986">
    <property type="protein sequence ID" value="AAH04986.1"/>
    <property type="molecule type" value="mRNA"/>
</dbReference>
<dbReference type="CCDS" id="CCDS8406.1"/>
<dbReference type="PIR" id="JQ1347">
    <property type="entry name" value="JQ1347"/>
</dbReference>
<dbReference type="RefSeq" id="NP_001019.1">
    <property type="nucleotide sequence ID" value="NM_001028.3"/>
</dbReference>
<dbReference type="PDB" id="4UG0">
    <property type="method" value="EM"/>
    <property type="chains" value="SZ=1-125"/>
</dbReference>
<dbReference type="PDB" id="4V6X">
    <property type="method" value="EM"/>
    <property type="resolution" value="5.00 A"/>
    <property type="chains" value="AZ=1-125"/>
</dbReference>
<dbReference type="PDB" id="5A2Q">
    <property type="method" value="EM"/>
    <property type="resolution" value="3.90 A"/>
    <property type="chains" value="Z=1-125"/>
</dbReference>
<dbReference type="PDB" id="5AJ0">
    <property type="method" value="EM"/>
    <property type="resolution" value="3.50 A"/>
    <property type="chains" value="BZ=1-125"/>
</dbReference>
<dbReference type="PDB" id="5FLX">
    <property type="method" value="EM"/>
    <property type="resolution" value="3.90 A"/>
    <property type="chains" value="Z=1-125"/>
</dbReference>
<dbReference type="PDB" id="5LKS">
    <property type="method" value="EM"/>
    <property type="resolution" value="3.60 A"/>
    <property type="chains" value="SZ=1-125"/>
</dbReference>
<dbReference type="PDB" id="5OA3">
    <property type="method" value="EM"/>
    <property type="resolution" value="4.30 A"/>
    <property type="chains" value="Z=1-125"/>
</dbReference>
<dbReference type="PDB" id="5T2C">
    <property type="method" value="EM"/>
    <property type="resolution" value="3.60 A"/>
    <property type="chains" value="AR=1-125"/>
</dbReference>
<dbReference type="PDB" id="5VYC">
    <property type="method" value="X-ray"/>
    <property type="resolution" value="6.00 A"/>
    <property type="chains" value="Z1/Z2/Z3/Z4/Z5/Z6=1-125"/>
</dbReference>
<dbReference type="PDB" id="6FEC">
    <property type="method" value="EM"/>
    <property type="resolution" value="6.30 A"/>
    <property type="chains" value="W=41-115"/>
</dbReference>
<dbReference type="PDB" id="6G18">
    <property type="method" value="EM"/>
    <property type="resolution" value="3.60 A"/>
    <property type="chains" value="Z=1-125"/>
</dbReference>
<dbReference type="PDB" id="6G4S">
    <property type="method" value="EM"/>
    <property type="resolution" value="4.00 A"/>
    <property type="chains" value="Z=1-125"/>
</dbReference>
<dbReference type="PDB" id="6G4W">
    <property type="method" value="EM"/>
    <property type="resolution" value="4.50 A"/>
    <property type="chains" value="Z=1-125"/>
</dbReference>
<dbReference type="PDB" id="6G51">
    <property type="method" value="EM"/>
    <property type="resolution" value="4.10 A"/>
    <property type="chains" value="Z=1-125"/>
</dbReference>
<dbReference type="PDB" id="6G53">
    <property type="method" value="EM"/>
    <property type="resolution" value="4.50 A"/>
    <property type="chains" value="Z=1-125"/>
</dbReference>
<dbReference type="PDB" id="6G5H">
    <property type="method" value="EM"/>
    <property type="resolution" value="3.60 A"/>
    <property type="chains" value="Z=1-125"/>
</dbReference>
<dbReference type="PDB" id="6G5I">
    <property type="method" value="EM"/>
    <property type="resolution" value="3.50 A"/>
    <property type="chains" value="Z=1-125"/>
</dbReference>
<dbReference type="PDB" id="6IP5">
    <property type="method" value="EM"/>
    <property type="resolution" value="3.90 A"/>
    <property type="chains" value="3O=1-125"/>
</dbReference>
<dbReference type="PDB" id="6IP6">
    <property type="method" value="EM"/>
    <property type="resolution" value="4.50 A"/>
    <property type="chains" value="3O=1-125"/>
</dbReference>
<dbReference type="PDB" id="6IP8">
    <property type="method" value="EM"/>
    <property type="resolution" value="3.90 A"/>
    <property type="chains" value="3O=1-125"/>
</dbReference>
<dbReference type="PDB" id="6OLE">
    <property type="method" value="EM"/>
    <property type="resolution" value="3.10 A"/>
    <property type="chains" value="SZ=43-115"/>
</dbReference>
<dbReference type="PDB" id="6OLF">
    <property type="method" value="EM"/>
    <property type="resolution" value="3.90 A"/>
    <property type="chains" value="SZ=43-115"/>
</dbReference>
<dbReference type="PDB" id="6OLG">
    <property type="method" value="EM"/>
    <property type="resolution" value="3.40 A"/>
    <property type="chains" value="BZ=28-113"/>
</dbReference>
<dbReference type="PDB" id="6OLI">
    <property type="method" value="EM"/>
    <property type="resolution" value="3.50 A"/>
    <property type="chains" value="SZ=43-115"/>
</dbReference>
<dbReference type="PDB" id="6OLZ">
    <property type="method" value="EM"/>
    <property type="resolution" value="3.90 A"/>
    <property type="chains" value="BZ=28-113"/>
</dbReference>
<dbReference type="PDB" id="6OM0">
    <property type="method" value="EM"/>
    <property type="resolution" value="3.10 A"/>
    <property type="chains" value="SZ=43-115"/>
</dbReference>
<dbReference type="PDB" id="6OM7">
    <property type="method" value="EM"/>
    <property type="resolution" value="3.70 A"/>
    <property type="chains" value="SZ=43-115"/>
</dbReference>
<dbReference type="PDB" id="6QZP">
    <property type="method" value="EM"/>
    <property type="resolution" value="2.90 A"/>
    <property type="chains" value="SZ=41-115"/>
</dbReference>
<dbReference type="PDB" id="6XA1">
    <property type="method" value="EM"/>
    <property type="resolution" value="2.80 A"/>
    <property type="chains" value="SZ=43-112"/>
</dbReference>
<dbReference type="PDB" id="6Y0G">
    <property type="method" value="EM"/>
    <property type="resolution" value="3.20 A"/>
    <property type="chains" value="SZ=1-125"/>
</dbReference>
<dbReference type="PDB" id="6Y2L">
    <property type="method" value="EM"/>
    <property type="resolution" value="3.00 A"/>
    <property type="chains" value="SZ=1-125"/>
</dbReference>
<dbReference type="PDB" id="6Y57">
    <property type="method" value="EM"/>
    <property type="resolution" value="3.50 A"/>
    <property type="chains" value="SZ=1-125"/>
</dbReference>
<dbReference type="PDB" id="6YBS">
    <property type="method" value="EM"/>
    <property type="resolution" value="3.10 A"/>
    <property type="chains" value="e=1-125"/>
</dbReference>
<dbReference type="PDB" id="6Z6L">
    <property type="method" value="EM"/>
    <property type="resolution" value="3.00 A"/>
    <property type="chains" value="SZ=1-125"/>
</dbReference>
<dbReference type="PDB" id="6Z6M">
    <property type="method" value="EM"/>
    <property type="resolution" value="3.10 A"/>
    <property type="chains" value="SZ=1-125"/>
</dbReference>
<dbReference type="PDB" id="6Z6N">
    <property type="method" value="EM"/>
    <property type="resolution" value="2.90 A"/>
    <property type="chains" value="SZ=1-125"/>
</dbReference>
<dbReference type="PDB" id="6ZLW">
    <property type="method" value="EM"/>
    <property type="resolution" value="2.60 A"/>
    <property type="chains" value="a=1-125"/>
</dbReference>
<dbReference type="PDB" id="6ZM7">
    <property type="method" value="EM"/>
    <property type="resolution" value="2.70 A"/>
    <property type="chains" value="SZ=1-125"/>
</dbReference>
<dbReference type="PDB" id="6ZME">
    <property type="method" value="EM"/>
    <property type="resolution" value="3.00 A"/>
    <property type="chains" value="SZ=1-125"/>
</dbReference>
<dbReference type="PDB" id="6ZMI">
    <property type="method" value="EM"/>
    <property type="resolution" value="2.60 A"/>
    <property type="chains" value="SZ=1-125"/>
</dbReference>
<dbReference type="PDB" id="6ZMO">
    <property type="method" value="EM"/>
    <property type="resolution" value="3.10 A"/>
    <property type="chains" value="SZ=1-125"/>
</dbReference>
<dbReference type="PDB" id="6ZMT">
    <property type="method" value="EM"/>
    <property type="resolution" value="3.00 A"/>
    <property type="chains" value="a=1-125"/>
</dbReference>
<dbReference type="PDB" id="6ZMW">
    <property type="method" value="EM"/>
    <property type="resolution" value="3.70 A"/>
    <property type="chains" value="e=1-125"/>
</dbReference>
<dbReference type="PDB" id="6ZN5">
    <property type="method" value="EM"/>
    <property type="resolution" value="3.20 A"/>
    <property type="chains" value="a=42-113"/>
</dbReference>
<dbReference type="PDB" id="6ZOJ">
    <property type="method" value="EM"/>
    <property type="resolution" value="2.80 A"/>
    <property type="chains" value="Z=1-125"/>
</dbReference>
<dbReference type="PDB" id="6ZOL">
    <property type="method" value="EM"/>
    <property type="resolution" value="2.80 A"/>
    <property type="chains" value="Z=1-125"/>
</dbReference>
<dbReference type="PDB" id="6ZON">
    <property type="method" value="EM"/>
    <property type="resolution" value="3.00 A"/>
    <property type="chains" value="P=1-125"/>
</dbReference>
<dbReference type="PDB" id="6ZP4">
    <property type="method" value="EM"/>
    <property type="resolution" value="2.90 A"/>
    <property type="chains" value="P=1-125"/>
</dbReference>
<dbReference type="PDB" id="6ZUO">
    <property type="method" value="EM"/>
    <property type="resolution" value="3.10 A"/>
    <property type="chains" value="Z=1-125"/>
</dbReference>
<dbReference type="PDB" id="6ZV6">
    <property type="method" value="EM"/>
    <property type="resolution" value="2.90 A"/>
    <property type="chains" value="Z=1-125"/>
</dbReference>
<dbReference type="PDB" id="6ZVH">
    <property type="method" value="EM"/>
    <property type="resolution" value="2.90 A"/>
    <property type="chains" value="Z=41-115"/>
</dbReference>
<dbReference type="PDB" id="6ZVJ">
    <property type="method" value="EM"/>
    <property type="resolution" value="3.80 A"/>
    <property type="chains" value="P=44-113"/>
</dbReference>
<dbReference type="PDB" id="6ZXD">
    <property type="method" value="EM"/>
    <property type="resolution" value="3.20 A"/>
    <property type="chains" value="Z=1-125"/>
</dbReference>
<dbReference type="PDB" id="6ZXE">
    <property type="method" value="EM"/>
    <property type="resolution" value="3.00 A"/>
    <property type="chains" value="Z=1-125"/>
</dbReference>
<dbReference type="PDB" id="6ZXF">
    <property type="method" value="EM"/>
    <property type="resolution" value="3.70 A"/>
    <property type="chains" value="Z=1-125"/>
</dbReference>
<dbReference type="PDB" id="6ZXG">
    <property type="method" value="EM"/>
    <property type="resolution" value="2.60 A"/>
    <property type="chains" value="Z=1-125"/>
</dbReference>
<dbReference type="PDB" id="6ZXH">
    <property type="method" value="EM"/>
    <property type="resolution" value="2.70 A"/>
    <property type="chains" value="Z=1-125"/>
</dbReference>
<dbReference type="PDB" id="7A09">
    <property type="method" value="EM"/>
    <property type="resolution" value="3.50 A"/>
    <property type="chains" value="P=1-125"/>
</dbReference>
<dbReference type="PDB" id="7K5I">
    <property type="method" value="EM"/>
    <property type="resolution" value="2.90 A"/>
    <property type="chains" value="Z=1-125"/>
</dbReference>
<dbReference type="PDB" id="7QP6">
    <property type="method" value="EM"/>
    <property type="resolution" value="4.70 A"/>
    <property type="chains" value="e=1-125"/>
</dbReference>
<dbReference type="PDB" id="7QP7">
    <property type="method" value="EM"/>
    <property type="resolution" value="3.70 A"/>
    <property type="chains" value="e=1-125"/>
</dbReference>
<dbReference type="PDB" id="7R4X">
    <property type="method" value="EM"/>
    <property type="resolution" value="2.15 A"/>
    <property type="chains" value="Z=1-125"/>
</dbReference>
<dbReference type="PDB" id="7TQL">
    <property type="method" value="EM"/>
    <property type="resolution" value="3.40 A"/>
    <property type="chains" value="a=42-113"/>
</dbReference>
<dbReference type="PDB" id="7WTT">
    <property type="method" value="EM"/>
    <property type="resolution" value="3.10 A"/>
    <property type="chains" value="Z=1-125"/>
</dbReference>
<dbReference type="PDB" id="7WTU">
    <property type="method" value="EM"/>
    <property type="resolution" value="3.00 A"/>
    <property type="chains" value="Z=1-125"/>
</dbReference>
<dbReference type="PDB" id="7WTV">
    <property type="method" value="EM"/>
    <property type="resolution" value="3.50 A"/>
    <property type="chains" value="Z=1-125"/>
</dbReference>
<dbReference type="PDB" id="7WTW">
    <property type="method" value="EM"/>
    <property type="resolution" value="3.20 A"/>
    <property type="chains" value="Z=1-125"/>
</dbReference>
<dbReference type="PDB" id="7WTX">
    <property type="method" value="EM"/>
    <property type="resolution" value="3.10 A"/>
    <property type="chains" value="Z=1-125"/>
</dbReference>
<dbReference type="PDB" id="7WTZ">
    <property type="method" value="EM"/>
    <property type="resolution" value="3.00 A"/>
    <property type="chains" value="Z=1-125"/>
</dbReference>
<dbReference type="PDB" id="7WU0">
    <property type="method" value="EM"/>
    <property type="resolution" value="3.30 A"/>
    <property type="chains" value="Z=1-125"/>
</dbReference>
<dbReference type="PDB" id="7XNX">
    <property type="method" value="EM"/>
    <property type="resolution" value="2.70 A"/>
    <property type="chains" value="SZ=1-125"/>
</dbReference>
<dbReference type="PDB" id="7XNY">
    <property type="method" value="EM"/>
    <property type="resolution" value="2.50 A"/>
    <property type="chains" value="SZ=1-125"/>
</dbReference>
<dbReference type="PDB" id="8G5Y">
    <property type="method" value="EM"/>
    <property type="resolution" value="2.29 A"/>
    <property type="chains" value="SZ=1-125"/>
</dbReference>
<dbReference type="PDB" id="8G60">
    <property type="method" value="EM"/>
    <property type="resolution" value="2.54 A"/>
    <property type="chains" value="SZ=1-125"/>
</dbReference>
<dbReference type="PDB" id="8G61">
    <property type="method" value="EM"/>
    <property type="resolution" value="2.94 A"/>
    <property type="chains" value="SZ=1-125"/>
</dbReference>
<dbReference type="PDB" id="8G6J">
    <property type="method" value="EM"/>
    <property type="resolution" value="2.80 A"/>
    <property type="chains" value="SZ=1-125"/>
</dbReference>
<dbReference type="PDB" id="8GLP">
    <property type="method" value="EM"/>
    <property type="resolution" value="1.67 A"/>
    <property type="chains" value="SZ=1-125"/>
</dbReference>
<dbReference type="PDB" id="8IFD">
    <property type="method" value="EM"/>
    <property type="resolution" value="2.59 A"/>
    <property type="chains" value="3O=1-125"/>
</dbReference>
<dbReference type="PDB" id="8IFE">
    <property type="method" value="EM"/>
    <property type="resolution" value="2.57 A"/>
    <property type="chains" value="3O=1-125"/>
</dbReference>
<dbReference type="PDB" id="8JDJ">
    <property type="method" value="EM"/>
    <property type="resolution" value="2.50 A"/>
    <property type="chains" value="AL=1-125"/>
</dbReference>
<dbReference type="PDB" id="8JDK">
    <property type="method" value="EM"/>
    <property type="resolution" value="2.26 A"/>
    <property type="chains" value="AL=1-125"/>
</dbReference>
<dbReference type="PDB" id="8JDL">
    <property type="method" value="EM"/>
    <property type="resolution" value="2.42 A"/>
    <property type="chains" value="AL=1-125"/>
</dbReference>
<dbReference type="PDB" id="8JDM">
    <property type="method" value="EM"/>
    <property type="resolution" value="2.67 A"/>
    <property type="chains" value="AL=1-125"/>
</dbReference>
<dbReference type="PDB" id="8K2C">
    <property type="method" value="EM"/>
    <property type="resolution" value="2.40 A"/>
    <property type="chains" value="SZ=1-125"/>
</dbReference>
<dbReference type="PDB" id="8OZ0">
    <property type="method" value="EM"/>
    <property type="resolution" value="3.50 A"/>
    <property type="chains" value="m=1-125"/>
</dbReference>
<dbReference type="PDB" id="8PJ1">
    <property type="method" value="EM"/>
    <property type="resolution" value="3.40 A"/>
    <property type="chains" value="e=1-125"/>
</dbReference>
<dbReference type="PDB" id="8PJ2">
    <property type="method" value="EM"/>
    <property type="resolution" value="3.40 A"/>
    <property type="chains" value="e=1-125"/>
</dbReference>
<dbReference type="PDB" id="8PJ3">
    <property type="method" value="EM"/>
    <property type="resolution" value="3.70 A"/>
    <property type="chains" value="e=1-125"/>
</dbReference>
<dbReference type="PDB" id="8PJ4">
    <property type="method" value="EM"/>
    <property type="resolution" value="3.20 A"/>
    <property type="chains" value="e=1-125"/>
</dbReference>
<dbReference type="PDB" id="8PJ5">
    <property type="method" value="EM"/>
    <property type="resolution" value="2.90 A"/>
    <property type="chains" value="e=1-125"/>
</dbReference>
<dbReference type="PDB" id="8PJ6">
    <property type="method" value="EM"/>
    <property type="resolution" value="2.90 A"/>
    <property type="chains" value="e=1-125"/>
</dbReference>
<dbReference type="PDB" id="8PPK">
    <property type="method" value="EM"/>
    <property type="resolution" value="2.98 A"/>
    <property type="chains" value="Z=1-125"/>
</dbReference>
<dbReference type="PDB" id="8PPL">
    <property type="method" value="EM"/>
    <property type="resolution" value="2.65 A"/>
    <property type="chains" value="AZ=1-125"/>
</dbReference>
<dbReference type="PDB" id="8QOI">
    <property type="method" value="EM"/>
    <property type="resolution" value="1.90 A"/>
    <property type="chains" value="SZ=1-125"/>
</dbReference>
<dbReference type="PDB" id="8T4S">
    <property type="method" value="EM"/>
    <property type="resolution" value="2.60 A"/>
    <property type="chains" value="Z=1-125"/>
</dbReference>
<dbReference type="PDB" id="8UKB">
    <property type="method" value="EM"/>
    <property type="resolution" value="3.05 A"/>
    <property type="chains" value="SZ=41-115"/>
</dbReference>
<dbReference type="PDB" id="8XP2">
    <property type="method" value="EM"/>
    <property type="resolution" value="3.20 A"/>
    <property type="chains" value="SZ=1-125"/>
</dbReference>
<dbReference type="PDB" id="8XP3">
    <property type="method" value="EM"/>
    <property type="resolution" value="3.40 A"/>
    <property type="chains" value="SZ=1-125"/>
</dbReference>
<dbReference type="PDB" id="8XSX">
    <property type="method" value="EM"/>
    <property type="resolution" value="2.40 A"/>
    <property type="chains" value="SZ=1-125"/>
</dbReference>
<dbReference type="PDB" id="8XSY">
    <property type="method" value="EM"/>
    <property type="resolution" value="3.00 A"/>
    <property type="chains" value="SZ=1-125"/>
</dbReference>
<dbReference type="PDB" id="8XSZ">
    <property type="method" value="EM"/>
    <property type="resolution" value="3.20 A"/>
    <property type="chains" value="SZ=1-125"/>
</dbReference>
<dbReference type="PDB" id="8XXL">
    <property type="method" value="EM"/>
    <property type="resolution" value="2.90 A"/>
    <property type="chains" value="SZ=1-125"/>
</dbReference>
<dbReference type="PDB" id="8XXM">
    <property type="method" value="EM"/>
    <property type="resolution" value="3.20 A"/>
    <property type="chains" value="SZ=1-125"/>
</dbReference>
<dbReference type="PDB" id="8XXN">
    <property type="method" value="EM"/>
    <property type="resolution" value="3.60 A"/>
    <property type="chains" value="SZ=1-125"/>
</dbReference>
<dbReference type="PDB" id="8Y0W">
    <property type="method" value="EM"/>
    <property type="resolution" value="3.40 A"/>
    <property type="chains" value="SZ=1-125"/>
</dbReference>
<dbReference type="PDB" id="8Y0X">
    <property type="method" value="EM"/>
    <property type="resolution" value="3.30 A"/>
    <property type="chains" value="SZ=1-125"/>
</dbReference>
<dbReference type="PDB" id="8YOO">
    <property type="method" value="EM"/>
    <property type="resolution" value="2.00 A"/>
    <property type="chains" value="SZ=1-125"/>
</dbReference>
<dbReference type="PDB" id="8YOP">
    <property type="method" value="EM"/>
    <property type="resolution" value="2.20 A"/>
    <property type="chains" value="SZ=1-125"/>
</dbReference>
<dbReference type="PDB" id="8ZDB">
    <property type="method" value="EM"/>
    <property type="resolution" value="3.60 A"/>
    <property type="chains" value="Z=1-125"/>
</dbReference>
<dbReference type="PDB" id="8ZDC">
    <property type="method" value="EM"/>
    <property type="resolution" value="3.80 A"/>
    <property type="chains" value="Z=1-125"/>
</dbReference>
<dbReference type="PDB" id="8ZDD">
    <property type="method" value="EM"/>
    <property type="resolution" value="3.70 A"/>
    <property type="chains" value="Z=1-125"/>
</dbReference>
<dbReference type="PDB" id="9BKD">
    <property type="method" value="EM"/>
    <property type="resolution" value="2.60 A"/>
    <property type="chains" value="e=1-125"/>
</dbReference>
<dbReference type="PDB" id="9BLN">
    <property type="method" value="EM"/>
    <property type="resolution" value="3.90 A"/>
    <property type="chains" value="e=1-125"/>
</dbReference>
<dbReference type="PDB" id="9C3H">
    <property type="method" value="EM"/>
    <property type="resolution" value="2.00 A"/>
    <property type="chains" value="Sc=1-125"/>
</dbReference>
<dbReference type="PDB" id="9G8M">
    <property type="method" value="EM"/>
    <property type="resolution" value="3.30 A"/>
    <property type="chains" value="SZ=1-125"/>
</dbReference>
<dbReference type="PDB" id="9G8O">
    <property type="method" value="EM"/>
    <property type="resolution" value="3.40 A"/>
    <property type="chains" value="SZ=1-125"/>
</dbReference>
<dbReference type="PDBsum" id="4UG0"/>
<dbReference type="PDBsum" id="4V6X"/>
<dbReference type="PDBsum" id="5A2Q"/>
<dbReference type="PDBsum" id="5AJ0"/>
<dbReference type="PDBsum" id="5FLX"/>
<dbReference type="PDBsum" id="5LKS"/>
<dbReference type="PDBsum" id="5OA3"/>
<dbReference type="PDBsum" id="5T2C"/>
<dbReference type="PDBsum" id="5VYC"/>
<dbReference type="PDBsum" id="6FEC"/>
<dbReference type="PDBsum" id="6G18"/>
<dbReference type="PDBsum" id="6G4S"/>
<dbReference type="PDBsum" id="6G4W"/>
<dbReference type="PDBsum" id="6G51"/>
<dbReference type="PDBsum" id="6G53"/>
<dbReference type="PDBsum" id="6G5H"/>
<dbReference type="PDBsum" id="6G5I"/>
<dbReference type="PDBsum" id="6IP5"/>
<dbReference type="PDBsum" id="6IP6"/>
<dbReference type="PDBsum" id="6IP8"/>
<dbReference type="PDBsum" id="6OLE"/>
<dbReference type="PDBsum" id="6OLF"/>
<dbReference type="PDBsum" id="6OLG"/>
<dbReference type="PDBsum" id="6OLI"/>
<dbReference type="PDBsum" id="6OLZ"/>
<dbReference type="PDBsum" id="6OM0"/>
<dbReference type="PDBsum" id="6OM7"/>
<dbReference type="PDBsum" id="6QZP"/>
<dbReference type="PDBsum" id="6XA1"/>
<dbReference type="PDBsum" id="6Y0G"/>
<dbReference type="PDBsum" id="6Y2L"/>
<dbReference type="PDBsum" id="6Y57"/>
<dbReference type="PDBsum" id="6YBS"/>
<dbReference type="PDBsum" id="6Z6L"/>
<dbReference type="PDBsum" id="6Z6M"/>
<dbReference type="PDBsum" id="6Z6N"/>
<dbReference type="PDBsum" id="6ZLW"/>
<dbReference type="PDBsum" id="6ZM7"/>
<dbReference type="PDBsum" id="6ZME"/>
<dbReference type="PDBsum" id="6ZMI"/>
<dbReference type="PDBsum" id="6ZMO"/>
<dbReference type="PDBsum" id="6ZMT"/>
<dbReference type="PDBsum" id="6ZMW"/>
<dbReference type="PDBsum" id="6ZN5"/>
<dbReference type="PDBsum" id="6ZOJ"/>
<dbReference type="PDBsum" id="6ZOL"/>
<dbReference type="PDBsum" id="6ZON"/>
<dbReference type="PDBsum" id="6ZP4"/>
<dbReference type="PDBsum" id="6ZUO"/>
<dbReference type="PDBsum" id="6ZV6"/>
<dbReference type="PDBsum" id="6ZVH"/>
<dbReference type="PDBsum" id="6ZVJ"/>
<dbReference type="PDBsum" id="6ZXD"/>
<dbReference type="PDBsum" id="6ZXE"/>
<dbReference type="PDBsum" id="6ZXF"/>
<dbReference type="PDBsum" id="6ZXG"/>
<dbReference type="PDBsum" id="6ZXH"/>
<dbReference type="PDBsum" id="7A09"/>
<dbReference type="PDBsum" id="7K5I"/>
<dbReference type="PDBsum" id="7QP6"/>
<dbReference type="PDBsum" id="7QP7"/>
<dbReference type="PDBsum" id="7R4X"/>
<dbReference type="PDBsum" id="7TQL"/>
<dbReference type="PDBsum" id="7WTT"/>
<dbReference type="PDBsum" id="7WTU"/>
<dbReference type="PDBsum" id="7WTV"/>
<dbReference type="PDBsum" id="7WTW"/>
<dbReference type="PDBsum" id="7WTX"/>
<dbReference type="PDBsum" id="7WTZ"/>
<dbReference type="PDBsum" id="7WU0"/>
<dbReference type="PDBsum" id="7XNX"/>
<dbReference type="PDBsum" id="7XNY"/>
<dbReference type="PDBsum" id="8G5Y"/>
<dbReference type="PDBsum" id="8G60"/>
<dbReference type="PDBsum" id="8G61"/>
<dbReference type="PDBsum" id="8G6J"/>
<dbReference type="PDBsum" id="8GLP"/>
<dbReference type="PDBsum" id="8IFD"/>
<dbReference type="PDBsum" id="8IFE"/>
<dbReference type="PDBsum" id="8JDJ"/>
<dbReference type="PDBsum" id="8JDK"/>
<dbReference type="PDBsum" id="8JDL"/>
<dbReference type="PDBsum" id="8JDM"/>
<dbReference type="PDBsum" id="8K2C"/>
<dbReference type="PDBsum" id="8OZ0"/>
<dbReference type="PDBsum" id="8PJ1"/>
<dbReference type="PDBsum" id="8PJ2"/>
<dbReference type="PDBsum" id="8PJ3"/>
<dbReference type="PDBsum" id="8PJ4"/>
<dbReference type="PDBsum" id="8PJ5"/>
<dbReference type="PDBsum" id="8PJ6"/>
<dbReference type="PDBsum" id="8PPK"/>
<dbReference type="PDBsum" id="8PPL"/>
<dbReference type="PDBsum" id="8QOI"/>
<dbReference type="PDBsum" id="8T4S"/>
<dbReference type="PDBsum" id="8UKB"/>
<dbReference type="PDBsum" id="8XP2"/>
<dbReference type="PDBsum" id="8XP3"/>
<dbReference type="PDBsum" id="8XSX"/>
<dbReference type="PDBsum" id="8XSY"/>
<dbReference type="PDBsum" id="8XSZ"/>
<dbReference type="PDBsum" id="8XXL"/>
<dbReference type="PDBsum" id="8XXM"/>
<dbReference type="PDBsum" id="8XXN"/>
<dbReference type="PDBsum" id="8Y0W"/>
<dbReference type="PDBsum" id="8Y0X"/>
<dbReference type="PDBsum" id="8YOO"/>
<dbReference type="PDBsum" id="8YOP"/>
<dbReference type="PDBsum" id="8ZDB"/>
<dbReference type="PDBsum" id="8ZDC"/>
<dbReference type="PDBsum" id="8ZDD"/>
<dbReference type="PDBsum" id="9BKD"/>
<dbReference type="PDBsum" id="9BLN"/>
<dbReference type="PDBsum" id="9C3H"/>
<dbReference type="PDBsum" id="9G8M"/>
<dbReference type="PDBsum" id="9G8O"/>
<dbReference type="EMDB" id="EMD-10668"/>
<dbReference type="EMDB" id="EMD-10674"/>
<dbReference type="EMDB" id="EMD-10690"/>
<dbReference type="EMDB" id="EMD-10772"/>
<dbReference type="EMDB" id="EMD-11098"/>
<dbReference type="EMDB" id="EMD-11099"/>
<dbReference type="EMDB" id="EMD-11100"/>
<dbReference type="EMDB" id="EMD-11276"/>
<dbReference type="EMDB" id="EMD-11288"/>
<dbReference type="EMDB" id="EMD-11289"/>
<dbReference type="EMDB" id="EMD-11292"/>
<dbReference type="EMDB" id="EMD-11299"/>
<dbReference type="EMDB" id="EMD-11301"/>
<dbReference type="EMDB" id="EMD-11302"/>
<dbReference type="EMDB" id="EMD-11310"/>
<dbReference type="EMDB" id="EMD-11320"/>
<dbReference type="EMDB" id="EMD-11322"/>
<dbReference type="EMDB" id="EMD-11325"/>
<dbReference type="EMDB" id="EMD-11335"/>
<dbReference type="EMDB" id="EMD-11440"/>
<dbReference type="EMDB" id="EMD-11441"/>
<dbReference type="EMDB" id="EMD-11456"/>
<dbReference type="EMDB" id="EMD-11458"/>
<dbReference type="EMDB" id="EMD-11517"/>
<dbReference type="EMDB" id="EMD-11518"/>
<dbReference type="EMDB" id="EMD-11519"/>
<dbReference type="EMDB" id="EMD-11520"/>
<dbReference type="EMDB" id="EMD-11521"/>
<dbReference type="EMDB" id="EMD-11602"/>
<dbReference type="EMDB" id="EMD-14113"/>
<dbReference type="EMDB" id="EMD-14114"/>
<dbReference type="EMDB" id="EMD-14317"/>
<dbReference type="EMDB" id="EMD-17297"/>
<dbReference type="EMDB" id="EMD-17696"/>
<dbReference type="EMDB" id="EMD-17697"/>
<dbReference type="EMDB" id="EMD-17698"/>
<dbReference type="EMDB" id="EMD-17699"/>
<dbReference type="EMDB" id="EMD-17700"/>
<dbReference type="EMDB" id="EMD-17701"/>
<dbReference type="EMDB" id="EMD-17804"/>
<dbReference type="EMDB" id="EMD-17805"/>
<dbReference type="EMDB" id="EMD-18539"/>
<dbReference type="EMDB" id="EMD-22681"/>
<dbReference type="EMDB" id="EMD-26067"/>
<dbReference type="EMDB" id="EMD-29757"/>
<dbReference type="EMDB" id="EMD-29758"/>
<dbReference type="EMDB" id="EMD-29759"/>
<dbReference type="EMDB" id="EMD-29760"/>
<dbReference type="EMDB" id="EMD-29771"/>
<dbReference type="EMDB" id="EMD-32800"/>
<dbReference type="EMDB" id="EMD-32801"/>
<dbReference type="EMDB" id="EMD-32802"/>
<dbReference type="EMDB" id="EMD-32803"/>
<dbReference type="EMDB" id="EMD-32804"/>
<dbReference type="EMDB" id="EMD-32806"/>
<dbReference type="EMDB" id="EMD-32807"/>
<dbReference type="EMDB" id="EMD-33329"/>
<dbReference type="EMDB" id="EMD-33330"/>
<dbReference type="EMDB" id="EMD-35413"/>
<dbReference type="EMDB" id="EMD-35414"/>
<dbReference type="EMDB" id="EMD-36178"/>
<dbReference type="EMDB" id="EMD-36179"/>
<dbReference type="EMDB" id="EMD-36180"/>
<dbReference type="EMDB" id="EMD-36181"/>
<dbReference type="EMDB" id="EMD-36838"/>
<dbReference type="EMDB" id="EMD-3770"/>
<dbReference type="EMDB" id="EMD-38548"/>
<dbReference type="EMDB" id="EMD-38549"/>
<dbReference type="EMDB" id="EMD-38629"/>
<dbReference type="EMDB" id="EMD-38630"/>
<dbReference type="EMDB" id="EMD-38631"/>
<dbReference type="EMDB" id="EMD-38752"/>
<dbReference type="EMDB" id="EMD-38753"/>
<dbReference type="EMDB" id="EMD-38754"/>
<dbReference type="EMDB" id="EMD-3883"/>
<dbReference type="EMDB" id="EMD-39455"/>
<dbReference type="EMDB" id="EMD-39456"/>
<dbReference type="EMDB" id="EMD-39956"/>
<dbReference type="EMDB" id="EMD-39957"/>
<dbReference type="EMDB" id="EMD-39958"/>
<dbReference type="EMDB" id="EMD-40205"/>
<dbReference type="EMDB" id="EMD-4070"/>
<dbReference type="EMDB" id="EMD-41039"/>
<dbReference type="EMDB" id="EMD-42351"/>
<dbReference type="EMDB" id="EMD-4242"/>
<dbReference type="EMDB" id="EMD-4337"/>
<dbReference type="EMDB" id="EMD-4348"/>
<dbReference type="EMDB" id="EMD-4349"/>
<dbReference type="EMDB" id="EMD-4350"/>
<dbReference type="EMDB" id="EMD-4351"/>
<dbReference type="EMDB" id="EMD-4352"/>
<dbReference type="EMDB" id="EMD-4353"/>
<dbReference type="EMDB" id="EMD-44641"/>
<dbReference type="EMDB" id="EMD-44671"/>
<dbReference type="EMDB" id="EMD-45170"/>
<dbReference type="EMDB" id="EMD-51132"/>
<dbReference type="EMDB" id="EMD-51134"/>
<dbReference type="EMDB" id="EMD-9701"/>
<dbReference type="EMDB" id="EMD-9702"/>
<dbReference type="EMDB" id="EMD-9703"/>
<dbReference type="SMR" id="P62851"/>
<dbReference type="BioGRID" id="112144">
    <property type="interactions" value="414"/>
</dbReference>
<dbReference type="ComplexPortal" id="CPX-5223">
    <property type="entry name" value="40S cytosolic small ribosomal subunit"/>
</dbReference>
<dbReference type="CORUM" id="P62851"/>
<dbReference type="FunCoup" id="P62851">
    <property type="interactions" value="1982"/>
</dbReference>
<dbReference type="IntAct" id="P62851">
    <property type="interactions" value="146"/>
</dbReference>
<dbReference type="MINT" id="P62851"/>
<dbReference type="STRING" id="9606.ENSP00000435096"/>
<dbReference type="GlyGen" id="P62851">
    <property type="glycosylation" value="1 site, 1 O-linked glycan (1 site)"/>
</dbReference>
<dbReference type="iPTMnet" id="P62851"/>
<dbReference type="PhosphoSitePlus" id="P62851"/>
<dbReference type="SwissPalm" id="P62851"/>
<dbReference type="BioMuta" id="RPS25"/>
<dbReference type="DMDM" id="51338648"/>
<dbReference type="jPOST" id="P62851"/>
<dbReference type="MassIVE" id="P62851"/>
<dbReference type="PaxDb" id="9606-ENSP00000435096"/>
<dbReference type="PeptideAtlas" id="P62851"/>
<dbReference type="ProteomicsDB" id="57437"/>
<dbReference type="Pumba" id="P62851"/>
<dbReference type="TopDownProteomics" id="P62851"/>
<dbReference type="Antibodypedia" id="32561">
    <property type="antibodies" value="221 antibodies from 25 providers"/>
</dbReference>
<dbReference type="DNASU" id="6230"/>
<dbReference type="Ensembl" id="ENST00000527673.2">
    <property type="protein sequence ID" value="ENSP00000435096.1"/>
    <property type="gene ID" value="ENSG00000118181.11"/>
</dbReference>
<dbReference type="Ensembl" id="ENST00000628770.2">
    <property type="protein sequence ID" value="ENSP00000486392.1"/>
    <property type="gene ID" value="ENSG00000280831.3"/>
</dbReference>
<dbReference type="GeneID" id="6230"/>
<dbReference type="KEGG" id="hsa:6230"/>
<dbReference type="MANE-Select" id="ENST00000527673.2">
    <property type="protein sequence ID" value="ENSP00000435096.1"/>
    <property type="RefSeq nucleotide sequence ID" value="NM_001028.3"/>
    <property type="RefSeq protein sequence ID" value="NP_001019.1"/>
</dbReference>
<dbReference type="UCSC" id="uc001pun.4">
    <property type="organism name" value="human"/>
</dbReference>
<dbReference type="AGR" id="HGNC:10413"/>
<dbReference type="CTD" id="6230"/>
<dbReference type="DisGeNET" id="6230"/>
<dbReference type="GeneCards" id="RPS25"/>
<dbReference type="HGNC" id="HGNC:10413">
    <property type="gene designation" value="RPS25"/>
</dbReference>
<dbReference type="HPA" id="ENSG00000118181">
    <property type="expression patterns" value="Low tissue specificity"/>
</dbReference>
<dbReference type="MIM" id="180465">
    <property type="type" value="gene"/>
</dbReference>
<dbReference type="neXtProt" id="NX_P62851"/>
<dbReference type="OpenTargets" id="ENSG00000118181"/>
<dbReference type="PharmGKB" id="PA34817"/>
<dbReference type="VEuPathDB" id="HostDB:ENSG00000118181"/>
<dbReference type="eggNOG" id="KOG1767">
    <property type="taxonomic scope" value="Eukaryota"/>
</dbReference>
<dbReference type="GeneTree" id="ENSGT00390000004856"/>
<dbReference type="HOGENOM" id="CLU_129470_0_1_1"/>
<dbReference type="InParanoid" id="P62851"/>
<dbReference type="OMA" id="RIVHHSG"/>
<dbReference type="OrthoDB" id="9485411at2759"/>
<dbReference type="PAN-GO" id="P62851">
    <property type="GO annotations" value="2 GO annotations based on evolutionary models"/>
</dbReference>
<dbReference type="PhylomeDB" id="P62851"/>
<dbReference type="TreeFam" id="TF314909"/>
<dbReference type="PathwayCommons" id="P62851"/>
<dbReference type="Reactome" id="R-HSA-156827">
    <property type="pathway name" value="L13a-mediated translational silencing of Ceruloplasmin expression"/>
</dbReference>
<dbReference type="Reactome" id="R-HSA-156902">
    <property type="pathway name" value="Peptide chain elongation"/>
</dbReference>
<dbReference type="Reactome" id="R-HSA-1799339">
    <property type="pathway name" value="SRP-dependent cotranslational protein targeting to membrane"/>
</dbReference>
<dbReference type="Reactome" id="R-HSA-192823">
    <property type="pathway name" value="Viral mRNA Translation"/>
</dbReference>
<dbReference type="Reactome" id="R-HSA-2408557">
    <property type="pathway name" value="Selenocysteine synthesis"/>
</dbReference>
<dbReference type="Reactome" id="R-HSA-6791226">
    <property type="pathway name" value="Major pathway of rRNA processing in the nucleolus and cytosol"/>
</dbReference>
<dbReference type="Reactome" id="R-HSA-72649">
    <property type="pathway name" value="Translation initiation complex formation"/>
</dbReference>
<dbReference type="Reactome" id="R-HSA-72689">
    <property type="pathway name" value="Formation of a pool of free 40S subunits"/>
</dbReference>
<dbReference type="Reactome" id="R-HSA-72695">
    <property type="pathway name" value="Formation of the ternary complex, and subsequently, the 43S complex"/>
</dbReference>
<dbReference type="Reactome" id="R-HSA-72702">
    <property type="pathway name" value="Ribosomal scanning and start codon recognition"/>
</dbReference>
<dbReference type="Reactome" id="R-HSA-72706">
    <property type="pathway name" value="GTP hydrolysis and joining of the 60S ribosomal subunit"/>
</dbReference>
<dbReference type="Reactome" id="R-HSA-72764">
    <property type="pathway name" value="Eukaryotic Translation Termination"/>
</dbReference>
<dbReference type="Reactome" id="R-HSA-9010553">
    <property type="pathway name" value="Regulation of expression of SLITs and ROBOs"/>
</dbReference>
<dbReference type="Reactome" id="R-HSA-9633012">
    <property type="pathway name" value="Response of EIF2AK4 (GCN2) to amino acid deficiency"/>
</dbReference>
<dbReference type="Reactome" id="R-HSA-9735869">
    <property type="pathway name" value="SARS-CoV-1 modulates host translation machinery"/>
</dbReference>
<dbReference type="Reactome" id="R-HSA-9754678">
    <property type="pathway name" value="SARS-CoV-2 modulates host translation machinery"/>
</dbReference>
<dbReference type="Reactome" id="R-HSA-975956">
    <property type="pathway name" value="Nonsense Mediated Decay (NMD) independent of the Exon Junction Complex (EJC)"/>
</dbReference>
<dbReference type="Reactome" id="R-HSA-975957">
    <property type="pathway name" value="Nonsense Mediated Decay (NMD) enhanced by the Exon Junction Complex (EJC)"/>
</dbReference>
<dbReference type="SignaLink" id="P62851"/>
<dbReference type="SIGNOR" id="P62851"/>
<dbReference type="BioGRID-ORCS" id="6230">
    <property type="hits" value="639 hits in 1099 CRISPR screens"/>
</dbReference>
<dbReference type="CD-CODE" id="232F8A39">
    <property type="entry name" value="P-body"/>
</dbReference>
<dbReference type="CD-CODE" id="91857CE7">
    <property type="entry name" value="Nucleolus"/>
</dbReference>
<dbReference type="ChiTaRS" id="RPS25">
    <property type="organism name" value="human"/>
</dbReference>
<dbReference type="EvolutionaryTrace" id="P62851"/>
<dbReference type="GeneWiki" id="RPS25"/>
<dbReference type="GenomeRNAi" id="6230"/>
<dbReference type="Pharos" id="P62851">
    <property type="development level" value="Tbio"/>
</dbReference>
<dbReference type="PRO" id="PR:P62851"/>
<dbReference type="Proteomes" id="UP000005640">
    <property type="component" value="Chromosome 11"/>
</dbReference>
<dbReference type="RNAct" id="P62851">
    <property type="molecule type" value="protein"/>
</dbReference>
<dbReference type="Bgee" id="ENSG00000118181">
    <property type="expression patterns" value="Expressed in left ovary and 100 other cell types or tissues"/>
</dbReference>
<dbReference type="ExpressionAtlas" id="P62851">
    <property type="expression patterns" value="baseline and differential"/>
</dbReference>
<dbReference type="GO" id="GO:0005737">
    <property type="term" value="C:cytoplasm"/>
    <property type="evidence" value="ECO:0000303"/>
    <property type="project" value="ComplexPortal"/>
</dbReference>
<dbReference type="GO" id="GO:0005829">
    <property type="term" value="C:cytosol"/>
    <property type="evidence" value="ECO:0000304"/>
    <property type="project" value="Reactome"/>
</dbReference>
<dbReference type="GO" id="GO:0022626">
    <property type="term" value="C:cytosolic ribosome"/>
    <property type="evidence" value="ECO:0000314"/>
    <property type="project" value="FlyBase"/>
</dbReference>
<dbReference type="GO" id="GO:0022627">
    <property type="term" value="C:cytosolic small ribosomal subunit"/>
    <property type="evidence" value="ECO:0000314"/>
    <property type="project" value="UniProtKB"/>
</dbReference>
<dbReference type="GO" id="GO:0070062">
    <property type="term" value="C:extracellular exosome"/>
    <property type="evidence" value="ECO:0007005"/>
    <property type="project" value="UniProtKB"/>
</dbReference>
<dbReference type="GO" id="GO:0005730">
    <property type="term" value="C:nucleolus"/>
    <property type="evidence" value="ECO:0000314"/>
    <property type="project" value="UniProtKB"/>
</dbReference>
<dbReference type="GO" id="GO:0005654">
    <property type="term" value="C:nucleoplasm"/>
    <property type="evidence" value="ECO:0000304"/>
    <property type="project" value="Reactome"/>
</dbReference>
<dbReference type="GO" id="GO:0005634">
    <property type="term" value="C:nucleus"/>
    <property type="evidence" value="ECO:0000314"/>
    <property type="project" value="UniProtKB"/>
</dbReference>
<dbReference type="GO" id="GO:0014069">
    <property type="term" value="C:postsynaptic density"/>
    <property type="evidence" value="ECO:0000314"/>
    <property type="project" value="SynGO"/>
</dbReference>
<dbReference type="GO" id="GO:0005840">
    <property type="term" value="C:ribosome"/>
    <property type="evidence" value="ECO:0000314"/>
    <property type="project" value="UniProtKB"/>
</dbReference>
<dbReference type="GO" id="GO:0015935">
    <property type="term" value="C:small ribosomal subunit"/>
    <property type="evidence" value="ECO:0007005"/>
    <property type="project" value="UniProtKB"/>
</dbReference>
<dbReference type="GO" id="GO:0003723">
    <property type="term" value="F:RNA binding"/>
    <property type="evidence" value="ECO:0007005"/>
    <property type="project" value="UniProtKB"/>
</dbReference>
<dbReference type="GO" id="GO:0003735">
    <property type="term" value="F:structural constituent of ribosome"/>
    <property type="evidence" value="ECO:0000314"/>
    <property type="project" value="FlyBase"/>
</dbReference>
<dbReference type="GO" id="GO:0002181">
    <property type="term" value="P:cytoplasmic translation"/>
    <property type="evidence" value="ECO:0000303"/>
    <property type="project" value="ComplexPortal"/>
</dbReference>
<dbReference type="GO" id="GO:0042274">
    <property type="term" value="P:ribosomal small subunit biogenesis"/>
    <property type="evidence" value="ECO:0000315"/>
    <property type="project" value="FlyBase"/>
</dbReference>
<dbReference type="GO" id="GO:0006364">
    <property type="term" value="P:rRNA processing"/>
    <property type="evidence" value="ECO:0000315"/>
    <property type="project" value="FlyBase"/>
</dbReference>
<dbReference type="GO" id="GO:0006412">
    <property type="term" value="P:translation"/>
    <property type="evidence" value="ECO:0000303"/>
    <property type="project" value="UniProtKB"/>
</dbReference>
<dbReference type="FunFam" id="1.10.10.10:FF:000166">
    <property type="entry name" value="40S ribosomal protein S25"/>
    <property type="match status" value="1"/>
</dbReference>
<dbReference type="Gene3D" id="1.10.10.10">
    <property type="entry name" value="Winged helix-like DNA-binding domain superfamily/Winged helix DNA-binding domain"/>
    <property type="match status" value="1"/>
</dbReference>
<dbReference type="InterPro" id="IPR004977">
    <property type="entry name" value="Ribosomal_eS25"/>
</dbReference>
<dbReference type="InterPro" id="IPR036388">
    <property type="entry name" value="WH-like_DNA-bd_sf"/>
</dbReference>
<dbReference type="PANTHER" id="PTHR12850">
    <property type="entry name" value="40S RIBOSOMAL PROTEIN S25"/>
    <property type="match status" value="1"/>
</dbReference>
<dbReference type="Pfam" id="PF03297">
    <property type="entry name" value="Ribosomal_S25"/>
    <property type="match status" value="1"/>
</dbReference>